<proteinExistence type="evidence at protein level"/>
<reference key="1">
    <citation type="journal article" date="1987" name="Biochemistry">
        <title>Ovomucoid third domains from 100 avian species: isolation, sequences, and hypervariability of enzyme-inhibitor contact residues.</title>
        <authorList>
            <person name="Laskowski M. Jr."/>
            <person name="Kato I."/>
            <person name="Ardelt W."/>
            <person name="Cook J."/>
            <person name="Denton A."/>
            <person name="Empie M.W."/>
            <person name="Kohr W.J."/>
            <person name="Park S.J."/>
            <person name="Parks K."/>
            <person name="Schatzley B.L."/>
            <person name="Schoenberger O.L."/>
            <person name="Tashiro M."/>
            <person name="Vichot G."/>
            <person name="Whatley H.E."/>
            <person name="Wieczorek A."/>
            <person name="Wieczorek M."/>
        </authorList>
    </citation>
    <scope>PROTEIN SEQUENCE</scope>
</reference>
<evidence type="ECO:0000255" key="1">
    <source>
        <dbReference type="PROSITE-ProRule" id="PRU00798"/>
    </source>
</evidence>
<keyword id="KW-0903">Direct protein sequencing</keyword>
<keyword id="KW-1015">Disulfide bond</keyword>
<keyword id="KW-0325">Glycoprotein</keyword>
<keyword id="KW-0646">Protease inhibitor</keyword>
<keyword id="KW-0677">Repeat</keyword>
<keyword id="KW-0964">Secreted</keyword>
<keyword id="KW-0722">Serine protease inhibitor</keyword>
<organism>
    <name type="scientific">Tragopan temminckii</name>
    <name type="common">Temminck's tragopan</name>
    <name type="synonym">Satyra temminckii</name>
    <dbReference type="NCBI Taxonomy" id="9071"/>
    <lineage>
        <taxon>Eukaryota</taxon>
        <taxon>Metazoa</taxon>
        <taxon>Chordata</taxon>
        <taxon>Craniata</taxon>
        <taxon>Vertebrata</taxon>
        <taxon>Euteleostomi</taxon>
        <taxon>Archelosauria</taxon>
        <taxon>Archosauria</taxon>
        <taxon>Dinosauria</taxon>
        <taxon>Saurischia</taxon>
        <taxon>Theropoda</taxon>
        <taxon>Coelurosauria</taxon>
        <taxon>Aves</taxon>
        <taxon>Neognathae</taxon>
        <taxon>Galloanserae</taxon>
        <taxon>Galliformes</taxon>
        <taxon>Phasianidae</taxon>
        <taxon>Phasianinae</taxon>
        <taxon>Tragopan</taxon>
    </lineage>
</organism>
<name>IOVO_TRATE</name>
<protein>
    <recommendedName>
        <fullName>Ovomucoid</fullName>
    </recommendedName>
</protein>
<comment type="subcellular location">
    <subcellularLocation>
        <location>Secreted</location>
    </subcellularLocation>
</comment>
<comment type="domain">
    <text>Avian ovomucoid consists of three homologous, tandem Kazal family inhibitory domains.</text>
</comment>
<dbReference type="PIR" id="D31446">
    <property type="entry name" value="D31446"/>
</dbReference>
<dbReference type="SMR" id="P67949"/>
<dbReference type="GO" id="GO:0005615">
    <property type="term" value="C:extracellular space"/>
    <property type="evidence" value="ECO:0007669"/>
    <property type="project" value="UniProtKB-ARBA"/>
</dbReference>
<dbReference type="GO" id="GO:0004867">
    <property type="term" value="F:serine-type endopeptidase inhibitor activity"/>
    <property type="evidence" value="ECO:0007669"/>
    <property type="project" value="UniProtKB-KW"/>
</dbReference>
<dbReference type="CDD" id="cd00104">
    <property type="entry name" value="KAZAL_FS"/>
    <property type="match status" value="1"/>
</dbReference>
<dbReference type="FunFam" id="3.30.60.30:FF:000037">
    <property type="entry name" value="Ovomucoid"/>
    <property type="match status" value="1"/>
</dbReference>
<dbReference type="Gene3D" id="3.30.60.30">
    <property type="match status" value="1"/>
</dbReference>
<dbReference type="InterPro" id="IPR051597">
    <property type="entry name" value="Bifunctional_prot_inhibitor"/>
</dbReference>
<dbReference type="InterPro" id="IPR002350">
    <property type="entry name" value="Kazal_dom"/>
</dbReference>
<dbReference type="InterPro" id="IPR036058">
    <property type="entry name" value="Kazal_dom_sf"/>
</dbReference>
<dbReference type="InterPro" id="IPR001239">
    <property type="entry name" value="Prot_inh_Kazal-m"/>
</dbReference>
<dbReference type="PANTHER" id="PTHR47729:SF1">
    <property type="entry name" value="OVOMUCOID-LIKE-RELATED"/>
    <property type="match status" value="1"/>
</dbReference>
<dbReference type="PANTHER" id="PTHR47729">
    <property type="entry name" value="SERINE PEPTIDASE INHIBITOR, KAZAL TYPE 2, TANDEM DUPLICATE 1-RELATED"/>
    <property type="match status" value="1"/>
</dbReference>
<dbReference type="Pfam" id="PF00050">
    <property type="entry name" value="Kazal_1"/>
    <property type="match status" value="1"/>
</dbReference>
<dbReference type="PRINTS" id="PR00290">
    <property type="entry name" value="KAZALINHBTR"/>
</dbReference>
<dbReference type="SMART" id="SM00280">
    <property type="entry name" value="KAZAL"/>
    <property type="match status" value="1"/>
</dbReference>
<dbReference type="SUPFAM" id="SSF100895">
    <property type="entry name" value="Kazal-type serine protease inhibitors"/>
    <property type="match status" value="1"/>
</dbReference>
<dbReference type="PROSITE" id="PS00282">
    <property type="entry name" value="KAZAL_1"/>
    <property type="match status" value="1"/>
</dbReference>
<dbReference type="PROSITE" id="PS51465">
    <property type="entry name" value="KAZAL_2"/>
    <property type="match status" value="1"/>
</dbReference>
<accession>P67949</accession>
<accession>P05586</accession>
<feature type="chain" id="PRO_0000073190" description="Ovomucoid">
    <location>
        <begin position="1" status="less than"/>
        <end position="56" status="greater than"/>
    </location>
</feature>
<feature type="domain" description="Kazal-like" evidence="1">
    <location>
        <begin position="6"/>
        <end position="56"/>
    </location>
</feature>
<feature type="site" description="Reactive bond 3">
    <location>
        <begin position="18"/>
        <end position="19"/>
    </location>
</feature>
<feature type="glycosylation site" description="N-linked (GlcNAc...) asparagine">
    <location>
        <position position="45"/>
    </location>
</feature>
<feature type="disulfide bond">
    <location>
        <begin position="8"/>
        <end position="38"/>
    </location>
</feature>
<feature type="disulfide bond">
    <location>
        <begin position="16"/>
        <end position="35"/>
    </location>
</feature>
<feature type="disulfide bond">
    <location>
        <begin position="24"/>
        <end position="56"/>
    </location>
</feature>
<feature type="non-terminal residue">
    <location>
        <position position="1"/>
    </location>
</feature>
<feature type="non-terminal residue">
    <location>
        <position position="56"/>
    </location>
</feature>
<sequence>LAAVSVDCSEYPKPACTMEYRPLCGSDNKTYGNKCNFCNAVVESNGTLTLSHFGKC</sequence>